<dbReference type="EMBL" id="AP009152">
    <property type="protein sequence ID" value="BAG29950.1"/>
    <property type="molecule type" value="Genomic_DNA"/>
</dbReference>
<dbReference type="RefSeq" id="WP_012398671.1">
    <property type="nucleotide sequence ID" value="NZ_VECX01000008.1"/>
</dbReference>
<dbReference type="SMR" id="B2GKJ1"/>
<dbReference type="STRING" id="378753.KRH_16030"/>
<dbReference type="KEGG" id="krh:KRH_16030"/>
<dbReference type="eggNOG" id="COG0858">
    <property type="taxonomic scope" value="Bacteria"/>
</dbReference>
<dbReference type="HOGENOM" id="CLU_089475_0_0_11"/>
<dbReference type="OrthoDB" id="307788at2"/>
<dbReference type="Proteomes" id="UP000008838">
    <property type="component" value="Chromosome"/>
</dbReference>
<dbReference type="GO" id="GO:0005829">
    <property type="term" value="C:cytosol"/>
    <property type="evidence" value="ECO:0007669"/>
    <property type="project" value="TreeGrafter"/>
</dbReference>
<dbReference type="GO" id="GO:0043024">
    <property type="term" value="F:ribosomal small subunit binding"/>
    <property type="evidence" value="ECO:0007669"/>
    <property type="project" value="TreeGrafter"/>
</dbReference>
<dbReference type="GO" id="GO:0030490">
    <property type="term" value="P:maturation of SSU-rRNA"/>
    <property type="evidence" value="ECO:0007669"/>
    <property type="project" value="UniProtKB-UniRule"/>
</dbReference>
<dbReference type="Gene3D" id="3.30.300.20">
    <property type="match status" value="1"/>
</dbReference>
<dbReference type="HAMAP" id="MF_00003">
    <property type="entry name" value="RbfA"/>
    <property type="match status" value="1"/>
</dbReference>
<dbReference type="InterPro" id="IPR015946">
    <property type="entry name" value="KH_dom-like_a/b"/>
</dbReference>
<dbReference type="InterPro" id="IPR000238">
    <property type="entry name" value="RbfA"/>
</dbReference>
<dbReference type="InterPro" id="IPR023799">
    <property type="entry name" value="RbfA_dom_sf"/>
</dbReference>
<dbReference type="NCBIfam" id="TIGR00082">
    <property type="entry name" value="rbfA"/>
    <property type="match status" value="1"/>
</dbReference>
<dbReference type="PANTHER" id="PTHR33515">
    <property type="entry name" value="RIBOSOME-BINDING FACTOR A, CHLOROPLASTIC-RELATED"/>
    <property type="match status" value="1"/>
</dbReference>
<dbReference type="PANTHER" id="PTHR33515:SF1">
    <property type="entry name" value="RIBOSOME-BINDING FACTOR A, CHLOROPLASTIC-RELATED"/>
    <property type="match status" value="1"/>
</dbReference>
<dbReference type="Pfam" id="PF02033">
    <property type="entry name" value="RBFA"/>
    <property type="match status" value="1"/>
</dbReference>
<dbReference type="SUPFAM" id="SSF89919">
    <property type="entry name" value="Ribosome-binding factor A, RbfA"/>
    <property type="match status" value="1"/>
</dbReference>
<gene>
    <name evidence="1" type="primary">rbfA</name>
    <name type="ordered locus">KRH_16030</name>
</gene>
<reference key="1">
    <citation type="journal article" date="2008" name="J. Bacteriol.">
        <title>Complete genome sequence of the soil actinomycete Kocuria rhizophila.</title>
        <authorList>
            <person name="Takarada H."/>
            <person name="Sekine M."/>
            <person name="Kosugi H."/>
            <person name="Matsuo Y."/>
            <person name="Fujisawa T."/>
            <person name="Omata S."/>
            <person name="Kishi E."/>
            <person name="Shimizu A."/>
            <person name="Tsukatani N."/>
            <person name="Tanikawa S."/>
            <person name="Fujita N."/>
            <person name="Harayama S."/>
        </authorList>
    </citation>
    <scope>NUCLEOTIDE SEQUENCE [LARGE SCALE GENOMIC DNA]</scope>
    <source>
        <strain>ATCC 9341 / DSM 348 / NBRC 103217 / DC2201</strain>
    </source>
</reference>
<name>RBFA_KOCRD</name>
<organism>
    <name type="scientific">Kocuria rhizophila (strain ATCC 9341 / DSM 348 / NBRC 103217 / DC2201)</name>
    <dbReference type="NCBI Taxonomy" id="378753"/>
    <lineage>
        <taxon>Bacteria</taxon>
        <taxon>Bacillati</taxon>
        <taxon>Actinomycetota</taxon>
        <taxon>Actinomycetes</taxon>
        <taxon>Micrococcales</taxon>
        <taxon>Micrococcaceae</taxon>
        <taxon>Kocuria</taxon>
    </lineage>
</organism>
<accession>B2GKJ1</accession>
<feature type="chain" id="PRO_1000088897" description="Ribosome-binding factor A">
    <location>
        <begin position="1"/>
        <end position="153"/>
    </location>
</feature>
<feature type="region of interest" description="Disordered" evidence="2">
    <location>
        <begin position="116"/>
        <end position="153"/>
    </location>
</feature>
<feature type="compositionally biased region" description="Low complexity" evidence="2">
    <location>
        <begin position="119"/>
        <end position="132"/>
    </location>
</feature>
<comment type="function">
    <text evidence="1">One of several proteins that assist in the late maturation steps of the functional core of the 30S ribosomal subunit. Associates with free 30S ribosomal subunits (but not with 30S subunits that are part of 70S ribosomes or polysomes). Required for efficient processing of 16S rRNA. May interact with the 5'-terminal helix region of 16S rRNA.</text>
</comment>
<comment type="subunit">
    <text evidence="1">Monomer. Binds 30S ribosomal subunits, but not 50S ribosomal subunits or 70S ribosomes.</text>
</comment>
<comment type="subcellular location">
    <subcellularLocation>
        <location evidence="1">Cytoplasm</location>
    </subcellularLocation>
</comment>
<comment type="similarity">
    <text evidence="1">Belongs to the RbfA family.</text>
</comment>
<sequence length="153" mass="16669">MADAARAARLADRIKVIVAQALERRVKDPRLGFVTVTDARVTNDLQHATLYYTVYGDEEQRADTARALESAKGVLRAEVGKNITARLTPTLTFVADEIPADAARLEELLRTAREKDAQVAEQAQGAQYAAGEDAYRTPSDEDDAEGPESAPRV</sequence>
<protein>
    <recommendedName>
        <fullName evidence="1">Ribosome-binding factor A</fullName>
    </recommendedName>
</protein>
<proteinExistence type="inferred from homology"/>
<evidence type="ECO:0000255" key="1">
    <source>
        <dbReference type="HAMAP-Rule" id="MF_00003"/>
    </source>
</evidence>
<evidence type="ECO:0000256" key="2">
    <source>
        <dbReference type="SAM" id="MobiDB-lite"/>
    </source>
</evidence>
<keyword id="KW-0963">Cytoplasm</keyword>
<keyword id="KW-1185">Reference proteome</keyword>
<keyword id="KW-0690">Ribosome biogenesis</keyword>